<sequence>MKKVWLNRYPADVPAEINPDRYQSLVELFEHAATRYADQPAFVNMGEVMTFRKLEERSRAFAAYLQQGLGLKKGDRVALMMPNLLQYPVALFGILRAGMIVVNVNPLYTPRELEHQLNDSGAAAIIIVSNFAHTLEKVVEKTSVQHVILTRMGDQLSTAKGTVVNFVVKYIKRLVPKYHLPDAISFRSALQHGYRMQYVKPEVVAEDLAFLQYTGGTTGVAKGAMLTHRNMLANLEQVKATYGPLLHPGKELVVTALPLYHIFALTMNCLLFIELGGQNLLITNPRDIPGLVKELAKYPFTAMTGVNTLFNALLNNKEFQQLDFSSLHLSAGGGMPVQNVVAERWVKLTGQYLLEGYGLTECAPLVSVNPHDIDYHSGSIGLPVPSTEAKLVDDDDNEVAPGEAGELCVKGPQVMLGYWQRPDATDEIIKDGWLHTGDIAVMDEDGFLRIVDRKKDMILVSGFNVYPNEIEDVVMQHSGVQEVAAVGVPSGSSGEAVKLFVVKKDPALTDDALITFCRRHLTGYKVPKQVEFREELPKSNVGKILRRELRDEARGKVDNKA</sequence>
<protein>
    <recommendedName>
        <fullName>Long-chain-fatty-acid--CoA ligase</fullName>
        <ecNumber evidence="1">6.2.1.3</ecNumber>
    </recommendedName>
    <alternativeName>
        <fullName>Long-chain acyl-CoA synthetase</fullName>
    </alternativeName>
</protein>
<proteinExistence type="inferred from homology"/>
<evidence type="ECO:0000250" key="1">
    <source>
        <dbReference type="UniProtKB" id="P69451"/>
    </source>
</evidence>
<evidence type="ECO:0000305" key="2"/>
<comment type="function">
    <text evidence="1">Catalyzes the esterification, concomitant with transport, of exogenous long-chain fatty acids into metabolically active CoA thioesters for subsequent degradation or incorporation into phospholipids.</text>
</comment>
<comment type="catalytic activity">
    <reaction evidence="1">
        <text>a long-chain fatty acid + ATP + CoA = a long-chain fatty acyl-CoA + AMP + diphosphate</text>
        <dbReference type="Rhea" id="RHEA:15421"/>
        <dbReference type="ChEBI" id="CHEBI:30616"/>
        <dbReference type="ChEBI" id="CHEBI:33019"/>
        <dbReference type="ChEBI" id="CHEBI:57287"/>
        <dbReference type="ChEBI" id="CHEBI:57560"/>
        <dbReference type="ChEBI" id="CHEBI:83139"/>
        <dbReference type="ChEBI" id="CHEBI:456215"/>
        <dbReference type="EC" id="6.2.1.3"/>
    </reaction>
</comment>
<comment type="cofactor">
    <cofactor evidence="1">
        <name>Mg(2+)</name>
        <dbReference type="ChEBI" id="CHEBI:18420"/>
    </cofactor>
</comment>
<comment type="pathway">
    <text evidence="1">Lipid metabolism; fatty acid beta-oxidation.</text>
</comment>
<comment type="subcellular location">
    <subcellularLocation>
        <location evidence="2">Membrane</location>
        <topology evidence="2">Peripheral membrane protein</topology>
    </subcellularLocation>
    <text evidence="2">Partially membrane-associated.</text>
</comment>
<comment type="similarity">
    <text evidence="2">Belongs to the ATP-dependent AMP-binding enzyme family.</text>
</comment>
<gene>
    <name type="primary">fadD</name>
    <name type="ordered locus">STM1818</name>
</gene>
<keyword id="KW-0067">ATP-binding</keyword>
<keyword id="KW-0276">Fatty acid metabolism</keyword>
<keyword id="KW-0436">Ligase</keyword>
<keyword id="KW-0443">Lipid metabolism</keyword>
<keyword id="KW-0460">Magnesium</keyword>
<keyword id="KW-0472">Membrane</keyword>
<keyword id="KW-0547">Nucleotide-binding</keyword>
<keyword id="KW-1185">Reference proteome</keyword>
<dbReference type="EC" id="6.2.1.3" evidence="1"/>
<dbReference type="EMBL" id="AE006468">
    <property type="protein sequence ID" value="AAL20733.1"/>
    <property type="molecule type" value="Genomic_DNA"/>
</dbReference>
<dbReference type="RefSeq" id="NP_460774.1">
    <property type="nucleotide sequence ID" value="NC_003197.2"/>
</dbReference>
<dbReference type="RefSeq" id="WP_000758418.1">
    <property type="nucleotide sequence ID" value="NC_003197.2"/>
</dbReference>
<dbReference type="SMR" id="P63521"/>
<dbReference type="STRING" id="99287.STM1818"/>
<dbReference type="PaxDb" id="99287-STM1818"/>
<dbReference type="GeneID" id="1253337"/>
<dbReference type="KEGG" id="stm:STM1818"/>
<dbReference type="PATRIC" id="fig|99287.12.peg.1918"/>
<dbReference type="HOGENOM" id="CLU_000022_59_7_6"/>
<dbReference type="OMA" id="ICCRGYN"/>
<dbReference type="PhylomeDB" id="P63521"/>
<dbReference type="BioCyc" id="SENT99287:STM1818-MONOMER"/>
<dbReference type="UniPathway" id="UPA00659"/>
<dbReference type="PHI-base" id="PHI:8132"/>
<dbReference type="Proteomes" id="UP000001014">
    <property type="component" value="Chromosome"/>
</dbReference>
<dbReference type="GO" id="GO:0016020">
    <property type="term" value="C:membrane"/>
    <property type="evidence" value="ECO:0007669"/>
    <property type="project" value="UniProtKB-SubCell"/>
</dbReference>
<dbReference type="GO" id="GO:0005524">
    <property type="term" value="F:ATP binding"/>
    <property type="evidence" value="ECO:0007669"/>
    <property type="project" value="UniProtKB-KW"/>
</dbReference>
<dbReference type="GO" id="GO:0004467">
    <property type="term" value="F:long-chain fatty acid-CoA ligase activity"/>
    <property type="evidence" value="ECO:0007669"/>
    <property type="project" value="UniProtKB-EC"/>
</dbReference>
<dbReference type="GO" id="GO:0006635">
    <property type="term" value="P:fatty acid beta-oxidation"/>
    <property type="evidence" value="ECO:0007669"/>
    <property type="project" value="UniProtKB-UniPathway"/>
</dbReference>
<dbReference type="CDD" id="cd05936">
    <property type="entry name" value="FC-FACS_FadD_like"/>
    <property type="match status" value="1"/>
</dbReference>
<dbReference type="FunFam" id="3.30.300.30:FF:000006">
    <property type="entry name" value="Long-chain-fatty-acid--CoA ligase FadD"/>
    <property type="match status" value="1"/>
</dbReference>
<dbReference type="FunFam" id="3.40.50.12780:FF:000003">
    <property type="entry name" value="Long-chain-fatty-acid--CoA ligase FadD"/>
    <property type="match status" value="1"/>
</dbReference>
<dbReference type="Gene3D" id="3.30.300.30">
    <property type="match status" value="1"/>
</dbReference>
<dbReference type="Gene3D" id="3.40.50.12780">
    <property type="entry name" value="N-terminal domain of ligase-like"/>
    <property type="match status" value="1"/>
</dbReference>
<dbReference type="InterPro" id="IPR025110">
    <property type="entry name" value="AMP-bd_C"/>
</dbReference>
<dbReference type="InterPro" id="IPR045851">
    <property type="entry name" value="AMP-bd_C_sf"/>
</dbReference>
<dbReference type="InterPro" id="IPR020845">
    <property type="entry name" value="AMP-binding_CS"/>
</dbReference>
<dbReference type="InterPro" id="IPR000873">
    <property type="entry name" value="AMP-dep_synth/lig_dom"/>
</dbReference>
<dbReference type="InterPro" id="IPR042099">
    <property type="entry name" value="ANL_N_sf"/>
</dbReference>
<dbReference type="InterPro" id="IPR050237">
    <property type="entry name" value="ATP-dep_AMP-bd_enzyme"/>
</dbReference>
<dbReference type="NCBIfam" id="NF006523">
    <property type="entry name" value="PRK08974.1"/>
    <property type="match status" value="1"/>
</dbReference>
<dbReference type="PANTHER" id="PTHR43767">
    <property type="entry name" value="LONG-CHAIN-FATTY-ACID--COA LIGASE"/>
    <property type="match status" value="1"/>
</dbReference>
<dbReference type="PANTHER" id="PTHR43767:SF8">
    <property type="entry name" value="LONG-CHAIN-FATTY-ACID--COA LIGASE"/>
    <property type="match status" value="1"/>
</dbReference>
<dbReference type="Pfam" id="PF00501">
    <property type="entry name" value="AMP-binding"/>
    <property type="match status" value="1"/>
</dbReference>
<dbReference type="Pfam" id="PF13193">
    <property type="entry name" value="AMP-binding_C"/>
    <property type="match status" value="1"/>
</dbReference>
<dbReference type="SUPFAM" id="SSF56801">
    <property type="entry name" value="Acetyl-CoA synthetase-like"/>
    <property type="match status" value="1"/>
</dbReference>
<dbReference type="PROSITE" id="PS00455">
    <property type="entry name" value="AMP_BINDING"/>
    <property type="match status" value="1"/>
</dbReference>
<feature type="chain" id="PRO_0000193129" description="Long-chain-fatty-acid--CoA ligase">
    <location>
        <begin position="1"/>
        <end position="561"/>
    </location>
</feature>
<feature type="binding site" evidence="2">
    <location>
        <begin position="213"/>
        <end position="224"/>
    </location>
    <ligand>
        <name>ATP</name>
        <dbReference type="ChEBI" id="CHEBI:30616"/>
    </ligand>
</feature>
<reference key="1">
    <citation type="journal article" date="2001" name="Nature">
        <title>Complete genome sequence of Salmonella enterica serovar Typhimurium LT2.</title>
        <authorList>
            <person name="McClelland M."/>
            <person name="Sanderson K.E."/>
            <person name="Spieth J."/>
            <person name="Clifton S.W."/>
            <person name="Latreille P."/>
            <person name="Courtney L."/>
            <person name="Porwollik S."/>
            <person name="Ali J."/>
            <person name="Dante M."/>
            <person name="Du F."/>
            <person name="Hou S."/>
            <person name="Layman D."/>
            <person name="Leonard S."/>
            <person name="Nguyen C."/>
            <person name="Scott K."/>
            <person name="Holmes A."/>
            <person name="Grewal N."/>
            <person name="Mulvaney E."/>
            <person name="Ryan E."/>
            <person name="Sun H."/>
            <person name="Florea L."/>
            <person name="Miller W."/>
            <person name="Stoneking T."/>
            <person name="Nhan M."/>
            <person name="Waterston R."/>
            <person name="Wilson R.K."/>
        </authorList>
    </citation>
    <scope>NUCLEOTIDE SEQUENCE [LARGE SCALE GENOMIC DNA]</scope>
    <source>
        <strain>LT2 / SGSC1412 / ATCC 700720</strain>
    </source>
</reference>
<accession>P63521</accession>
<accession>Q8XGG8</accession>
<organism>
    <name type="scientific">Salmonella typhimurium (strain LT2 / SGSC1412 / ATCC 700720)</name>
    <dbReference type="NCBI Taxonomy" id="99287"/>
    <lineage>
        <taxon>Bacteria</taxon>
        <taxon>Pseudomonadati</taxon>
        <taxon>Pseudomonadota</taxon>
        <taxon>Gammaproteobacteria</taxon>
        <taxon>Enterobacterales</taxon>
        <taxon>Enterobacteriaceae</taxon>
        <taxon>Salmonella</taxon>
    </lineage>
</organism>
<name>LCFA_SALTY</name>